<dbReference type="EMBL" id="AAHF01000004">
    <property type="protein sequence ID" value="EAL90712.1"/>
    <property type="molecule type" value="Genomic_DNA"/>
</dbReference>
<dbReference type="RefSeq" id="XP_752750.1">
    <property type="nucleotide sequence ID" value="XM_747657.1"/>
</dbReference>
<dbReference type="SMR" id="Q4WS70"/>
<dbReference type="STRING" id="330879.Q4WS70"/>
<dbReference type="EnsemblFungi" id="EAL90712">
    <property type="protein sequence ID" value="EAL90712"/>
    <property type="gene ID" value="AFUA_1G13800"/>
</dbReference>
<dbReference type="GeneID" id="3510614"/>
<dbReference type="KEGG" id="afm:AFUA_1G13800"/>
<dbReference type="VEuPathDB" id="FungiDB:Afu1g13800"/>
<dbReference type="eggNOG" id="KOG0255">
    <property type="taxonomic scope" value="Eukaryota"/>
</dbReference>
<dbReference type="HOGENOM" id="CLU_008455_11_6_1"/>
<dbReference type="InParanoid" id="Q4WS70"/>
<dbReference type="OMA" id="TAFNCGS"/>
<dbReference type="OrthoDB" id="446368at2759"/>
<dbReference type="Proteomes" id="UP000002530">
    <property type="component" value="Chromosome 1"/>
</dbReference>
<dbReference type="GO" id="GO:0005886">
    <property type="term" value="C:plasma membrane"/>
    <property type="evidence" value="ECO:0000318"/>
    <property type="project" value="GO_Central"/>
</dbReference>
<dbReference type="GO" id="GO:0022857">
    <property type="term" value="F:transmembrane transporter activity"/>
    <property type="evidence" value="ECO:0000318"/>
    <property type="project" value="GO_Central"/>
</dbReference>
<dbReference type="GO" id="GO:0055085">
    <property type="term" value="P:transmembrane transport"/>
    <property type="evidence" value="ECO:0000318"/>
    <property type="project" value="GO_Central"/>
</dbReference>
<dbReference type="CDD" id="cd17323">
    <property type="entry name" value="MFS_Tpo1_MDR_like"/>
    <property type="match status" value="1"/>
</dbReference>
<dbReference type="FunFam" id="1.20.1250.20:FF:000266">
    <property type="entry name" value="MFS multidrug transporter, putative"/>
    <property type="match status" value="1"/>
</dbReference>
<dbReference type="Gene3D" id="1.20.1250.20">
    <property type="entry name" value="MFS general substrate transporter like domains"/>
    <property type="match status" value="1"/>
</dbReference>
<dbReference type="InterPro" id="IPR011701">
    <property type="entry name" value="MFS"/>
</dbReference>
<dbReference type="InterPro" id="IPR020846">
    <property type="entry name" value="MFS_dom"/>
</dbReference>
<dbReference type="InterPro" id="IPR036259">
    <property type="entry name" value="MFS_trans_sf"/>
</dbReference>
<dbReference type="PANTHER" id="PTHR23502">
    <property type="entry name" value="MAJOR FACILITATOR SUPERFAMILY"/>
    <property type="match status" value="1"/>
</dbReference>
<dbReference type="PANTHER" id="PTHR23502:SF186">
    <property type="entry name" value="MAJOR FACILITATOR SUPERFAMILY (MFS) PROFILE DOMAIN-CONTAINING PROTEIN"/>
    <property type="match status" value="1"/>
</dbReference>
<dbReference type="Pfam" id="PF07690">
    <property type="entry name" value="MFS_1"/>
    <property type="match status" value="1"/>
</dbReference>
<dbReference type="SUPFAM" id="SSF103473">
    <property type="entry name" value="MFS general substrate transporter"/>
    <property type="match status" value="1"/>
</dbReference>
<dbReference type="PROSITE" id="PS50850">
    <property type="entry name" value="MFS"/>
    <property type="match status" value="1"/>
</dbReference>
<sequence length="607" mass="67431">MATEKGDQNAEKIEQSLPQKIPYWRLVVDQGVLTQQIIDYPYKGSGTEEDPYEVVWMENDPRNPMTWTQLRKWSLTMTVAVSTLAVALVSSAYTGGVREIEAEFHIGSEVATLGVSLFVLGFAIGPLLWAPLSEMFGRQIIFTVTYCALTAFNAGSAGAQNSWTLIILRFFAGAFGASPLTNAGGVIADMFHAKQRGIAMSLFAAAPFLGPVLGPIIGGFLGMNAGWRWVMGFLGAFSGAVWIICTIFVPETYAPVLLRRRAEKLSKHTGKVYVSKIDIDQGRVTLKDAFKTALSRPWILLFKEPIVFLLSLYMAIIYGTLYMLFSAYPIVFQGVRHWNQGVSSLPFLGIMVGMMFAVTYSVWDNKRYVQVQAKHGGFAPPEARLPPTLIASVAIPIGLFWFAWTNYPSIHWIVCILAGAPFGFGMVLVFLGIMNYLIDAYTIFAASVLAANSVLRSIFGAVFPLFTTYMYEDLGIHWASSIPAFLALACVPFPFLFYKYGATIRKRCEYAAKSDAFMRKLAEQMKQAPEPESEETEEPVFDRTEAPAPDVSDVSETESNVEELPDVRQMRSRASTRTASSLRRVVSYEGNPYDIDRVNTRESFTKK</sequence>
<feature type="chain" id="PRO_0000445106" description="Major facilitator superfamily multidrug transporter mdrA">
    <location>
        <begin position="1"/>
        <end position="607"/>
    </location>
</feature>
<feature type="transmembrane region" description="Helical" evidence="1">
    <location>
        <begin position="77"/>
        <end position="97"/>
    </location>
</feature>
<feature type="transmembrane region" description="Helical" evidence="1">
    <location>
        <begin position="110"/>
        <end position="130"/>
    </location>
</feature>
<feature type="transmembrane region" description="Helical" evidence="1">
    <location>
        <begin position="139"/>
        <end position="159"/>
    </location>
</feature>
<feature type="transmembrane region" description="Helical" evidence="1">
    <location>
        <begin position="170"/>
        <end position="190"/>
    </location>
</feature>
<feature type="transmembrane region" description="Helical" evidence="1">
    <location>
        <begin position="202"/>
        <end position="222"/>
    </location>
</feature>
<feature type="transmembrane region" description="Helical" evidence="1">
    <location>
        <begin position="229"/>
        <end position="249"/>
    </location>
</feature>
<feature type="transmembrane region" description="Helical" evidence="1">
    <location>
        <begin position="305"/>
        <end position="325"/>
    </location>
</feature>
<feature type="transmembrane region" description="Helical" evidence="1">
    <location>
        <begin position="342"/>
        <end position="362"/>
    </location>
</feature>
<feature type="transmembrane region" description="Helical" evidence="1">
    <location>
        <begin position="385"/>
        <end position="405"/>
    </location>
</feature>
<feature type="transmembrane region" description="Helical" evidence="1">
    <location>
        <begin position="413"/>
        <end position="433"/>
    </location>
</feature>
<feature type="transmembrane region" description="Helical" evidence="1">
    <location>
        <begin position="443"/>
        <end position="463"/>
    </location>
</feature>
<feature type="transmembrane region" description="Helical" evidence="1">
    <location>
        <begin position="478"/>
        <end position="498"/>
    </location>
</feature>
<feature type="region of interest" description="Disordered" evidence="2">
    <location>
        <begin position="523"/>
        <end position="583"/>
    </location>
</feature>
<feature type="compositionally biased region" description="Acidic residues" evidence="2">
    <location>
        <begin position="553"/>
        <end position="564"/>
    </location>
</feature>
<feature type="compositionally biased region" description="Low complexity" evidence="2">
    <location>
        <begin position="572"/>
        <end position="583"/>
    </location>
</feature>
<organism>
    <name type="scientific">Aspergillus fumigatus (strain ATCC MYA-4609 / CBS 101355 / FGSC A1100 / Af293)</name>
    <name type="common">Neosartorya fumigata</name>
    <dbReference type="NCBI Taxonomy" id="330879"/>
    <lineage>
        <taxon>Eukaryota</taxon>
        <taxon>Fungi</taxon>
        <taxon>Dikarya</taxon>
        <taxon>Ascomycota</taxon>
        <taxon>Pezizomycotina</taxon>
        <taxon>Eurotiomycetes</taxon>
        <taxon>Eurotiomycetidae</taxon>
        <taxon>Eurotiales</taxon>
        <taxon>Aspergillaceae</taxon>
        <taxon>Aspergillus</taxon>
        <taxon>Aspergillus subgen. Fumigati</taxon>
    </lineage>
</organism>
<name>MDRA_ASPFU</name>
<protein>
    <recommendedName>
        <fullName evidence="5">Major facilitator superfamily multidrug transporter mdrA</fullName>
    </recommendedName>
</protein>
<gene>
    <name evidence="5" type="primary">mdrA</name>
    <name type="ORF">AFUA_1G13800</name>
</gene>
<accession>Q4WS70</accession>
<evidence type="ECO:0000255" key="1"/>
<evidence type="ECO:0000256" key="2">
    <source>
        <dbReference type="SAM" id="MobiDB-lite"/>
    </source>
</evidence>
<evidence type="ECO:0000269" key="3">
    <source>
    </source>
</evidence>
<evidence type="ECO:0000269" key="4">
    <source>
    </source>
</evidence>
<evidence type="ECO:0000303" key="5">
    <source>
    </source>
</evidence>
<evidence type="ECO:0000305" key="6"/>
<keyword id="KW-1003">Cell membrane</keyword>
<keyword id="KW-0472">Membrane</keyword>
<keyword id="KW-1185">Reference proteome</keyword>
<keyword id="KW-0812">Transmembrane</keyword>
<keyword id="KW-1133">Transmembrane helix</keyword>
<keyword id="KW-0813">Transport</keyword>
<reference key="1">
    <citation type="journal article" date="2005" name="Nature">
        <title>Genomic sequence of the pathogenic and allergenic filamentous fungus Aspergillus fumigatus.</title>
        <authorList>
            <person name="Nierman W.C."/>
            <person name="Pain A."/>
            <person name="Anderson M.J."/>
            <person name="Wortman J.R."/>
            <person name="Kim H.S."/>
            <person name="Arroyo J."/>
            <person name="Berriman M."/>
            <person name="Abe K."/>
            <person name="Archer D.B."/>
            <person name="Bermejo C."/>
            <person name="Bennett J.W."/>
            <person name="Bowyer P."/>
            <person name="Chen D."/>
            <person name="Collins M."/>
            <person name="Coulsen R."/>
            <person name="Davies R."/>
            <person name="Dyer P.S."/>
            <person name="Farman M.L."/>
            <person name="Fedorova N."/>
            <person name="Fedorova N.D."/>
            <person name="Feldblyum T.V."/>
            <person name="Fischer R."/>
            <person name="Fosker N."/>
            <person name="Fraser A."/>
            <person name="Garcia J.L."/>
            <person name="Garcia M.J."/>
            <person name="Goble A."/>
            <person name="Goldman G.H."/>
            <person name="Gomi K."/>
            <person name="Griffith-Jones S."/>
            <person name="Gwilliam R."/>
            <person name="Haas B.J."/>
            <person name="Haas H."/>
            <person name="Harris D.E."/>
            <person name="Horiuchi H."/>
            <person name="Huang J."/>
            <person name="Humphray S."/>
            <person name="Jimenez J."/>
            <person name="Keller N."/>
            <person name="Khouri H."/>
            <person name="Kitamoto K."/>
            <person name="Kobayashi T."/>
            <person name="Konzack S."/>
            <person name="Kulkarni R."/>
            <person name="Kumagai T."/>
            <person name="Lafton A."/>
            <person name="Latge J.-P."/>
            <person name="Li W."/>
            <person name="Lord A."/>
            <person name="Lu C."/>
            <person name="Majoros W.H."/>
            <person name="May G.S."/>
            <person name="Miller B.L."/>
            <person name="Mohamoud Y."/>
            <person name="Molina M."/>
            <person name="Monod M."/>
            <person name="Mouyna I."/>
            <person name="Mulligan S."/>
            <person name="Murphy L.D."/>
            <person name="O'Neil S."/>
            <person name="Paulsen I."/>
            <person name="Penalva M.A."/>
            <person name="Pertea M."/>
            <person name="Price C."/>
            <person name="Pritchard B.L."/>
            <person name="Quail M.A."/>
            <person name="Rabbinowitsch E."/>
            <person name="Rawlins N."/>
            <person name="Rajandream M.A."/>
            <person name="Reichard U."/>
            <person name="Renauld H."/>
            <person name="Robson G.D."/>
            <person name="Rodriguez de Cordoba S."/>
            <person name="Rodriguez-Pena J.M."/>
            <person name="Ronning C.M."/>
            <person name="Rutter S."/>
            <person name="Salzberg S.L."/>
            <person name="Sanchez M."/>
            <person name="Sanchez-Ferrero J.C."/>
            <person name="Saunders D."/>
            <person name="Seeger K."/>
            <person name="Squares R."/>
            <person name="Squares S."/>
            <person name="Takeuchi M."/>
            <person name="Tekaia F."/>
            <person name="Turner G."/>
            <person name="Vazquez de Aldana C.R."/>
            <person name="Weidman J."/>
            <person name="White O."/>
            <person name="Woodward J.R."/>
            <person name="Yu J.-H."/>
            <person name="Fraser C.M."/>
            <person name="Galagan J.E."/>
            <person name="Asai K."/>
            <person name="Machida M."/>
            <person name="Hall N."/>
            <person name="Barrell B.G."/>
            <person name="Denning D.W."/>
        </authorList>
    </citation>
    <scope>NUCLEOTIDE SEQUENCE [LARGE SCALE GENOMIC DNA]</scope>
    <source>
        <strain>ATCC MYA-4609 / CBS 101355 / FGSC A1100 / Af293</strain>
    </source>
</reference>
<reference key="2">
    <citation type="journal article" date="2011" name="PLoS ONE">
        <title>The temporal dynamics of differential gene expression in Aspergillus fumigatus interacting with human immature dendritic cells in vitro.</title>
        <authorList>
            <person name="Morton C.O."/>
            <person name="Varga J.J."/>
            <person name="Hornbach A."/>
            <person name="Mezger M."/>
            <person name="Sennefelder H."/>
            <person name="Kneitz S."/>
            <person name="Kurzai O."/>
            <person name="Krappmann S."/>
            <person name="Einsele H."/>
            <person name="Nierman W.C."/>
            <person name="Rogers T.R."/>
            <person name="Loeffler J."/>
        </authorList>
    </citation>
    <scope>INDUCTION</scope>
</reference>
<reference key="3">
    <citation type="journal article" date="2016" name="Med. Mycol.">
        <title>Identification of Aspergillus fumigatus multidrug transporter genes and their potential involvement in antifungal resistance.</title>
        <authorList>
            <person name="Meneau I."/>
            <person name="Coste A.T."/>
            <person name="Sanglard D."/>
        </authorList>
    </citation>
    <scope>FUNCTION</scope>
    <scope>INDUCTION</scope>
    <scope>DISRUPTION PHENOTYPE</scope>
</reference>
<proteinExistence type="evidence at transcript level"/>
<comment type="function">
    <text evidence="4">MFS transporter involved in the basal level of azole susceptibility (PubMed:26933209). Confers resistance to voriconazole and, to a lesser extent, to fluconazole (PubMed:26933209).</text>
</comment>
<comment type="subcellular location">
    <subcellularLocation>
        <location evidence="6">Cell membrane</location>
        <topology evidence="1">Multi-pass membrane protein</topology>
    </subcellularLocation>
</comment>
<comment type="induction">
    <text evidence="3 4">Expression is up-regulated by exposure to human monocyte-derived immature dendritic cells (PubMed:21264256). Expression is increased in clinical azole-resistant isolates (PubMed:26933209).</text>
</comment>
<comment type="disruption phenotype">
    <text evidence="4">Exhibits enhanced susceptibility to voriconazole, however itraconazole susceptibility is less affected.</text>
</comment>
<comment type="similarity">
    <text evidence="6">Belongs to the major facilitator superfamily. DHA1 family. Polyamines/proton antiporter (TC 2.A.1.2.16) subfamily.</text>
</comment>